<proteinExistence type="inferred from homology"/>
<comment type="function">
    <text evidence="1">May regulate the transcription of the frlABCDR operon, involved in the utilization of fructoselysine and psicoselysine.</text>
</comment>
<comment type="pathway">
    <text evidence="1">Carbohydrate metabolism; fructoselysine degradation [regulation].</text>
</comment>
<comment type="sequence caution" evidence="3">
    <conflict type="erroneous initiation">
        <sequence resource="EMBL-CDS" id="AAG58483"/>
    </conflict>
    <text>Extended N-terminus.</text>
</comment>
<organism>
    <name type="scientific">Escherichia coli O157:H7</name>
    <dbReference type="NCBI Taxonomy" id="83334"/>
    <lineage>
        <taxon>Bacteria</taxon>
        <taxon>Pseudomonadati</taxon>
        <taxon>Pseudomonadota</taxon>
        <taxon>Gammaproteobacteria</taxon>
        <taxon>Enterobacterales</taxon>
        <taxon>Enterobacteriaceae</taxon>
        <taxon>Escherichia</taxon>
    </lineage>
</organism>
<evidence type="ECO:0000250" key="1">
    <source>
        <dbReference type="UniProtKB" id="P45544"/>
    </source>
</evidence>
<evidence type="ECO:0000255" key="2">
    <source>
        <dbReference type="PROSITE-ProRule" id="PRU00307"/>
    </source>
</evidence>
<evidence type="ECO:0000305" key="3"/>
<protein>
    <recommendedName>
        <fullName evidence="1">Probable fructoselysine utilization operon transcriptional repressor</fullName>
    </recommendedName>
    <alternativeName>
        <fullName evidence="1">HTH-type transcriptional regulator FrlR</fullName>
    </alternativeName>
</protein>
<gene>
    <name type="primary">frlR</name>
    <name type="ordered locus">Z4736</name>
    <name type="ordered locus">ECs4225</name>
</gene>
<sequence>MSATDRYSHQLLYATVRQRLLDDIAQGVYQAGQQIPTENELCTQYNVSRITIRKAISDLVADGVLIRWQGKGTFVQSQKVENALLTVSGFTDFGVSQGKATKEKVIEQERISAAPFCEKLNIPGNSEVFHLCRVMYLDKEPLFIDSSWIPLSRYPDFDEIYVEGSSTYQLFQERFDTRVVSDKKTIDIFAATRPQAKWLKCELGEPLFRISKIAFDQNDKPVHVSELFCRANRITLTIDNKRH</sequence>
<name>FRLR_ECO57</name>
<reference key="1">
    <citation type="journal article" date="2001" name="Nature">
        <title>Genome sequence of enterohaemorrhagic Escherichia coli O157:H7.</title>
        <authorList>
            <person name="Perna N.T."/>
            <person name="Plunkett G. III"/>
            <person name="Burland V."/>
            <person name="Mau B."/>
            <person name="Glasner J.D."/>
            <person name="Rose D.J."/>
            <person name="Mayhew G.F."/>
            <person name="Evans P.S."/>
            <person name="Gregor J."/>
            <person name="Kirkpatrick H.A."/>
            <person name="Posfai G."/>
            <person name="Hackett J."/>
            <person name="Klink S."/>
            <person name="Boutin A."/>
            <person name="Shao Y."/>
            <person name="Miller L."/>
            <person name="Grotbeck E.J."/>
            <person name="Davis N.W."/>
            <person name="Lim A."/>
            <person name="Dimalanta E.T."/>
            <person name="Potamousis K."/>
            <person name="Apodaca J."/>
            <person name="Anantharaman T.S."/>
            <person name="Lin J."/>
            <person name="Yen G."/>
            <person name="Schwartz D.C."/>
            <person name="Welch R.A."/>
            <person name="Blattner F.R."/>
        </authorList>
    </citation>
    <scope>NUCLEOTIDE SEQUENCE [LARGE SCALE GENOMIC DNA]</scope>
    <source>
        <strain>O157:H7 / EDL933 / ATCC 700927 / EHEC</strain>
    </source>
</reference>
<reference key="2">
    <citation type="journal article" date="2001" name="DNA Res.">
        <title>Complete genome sequence of enterohemorrhagic Escherichia coli O157:H7 and genomic comparison with a laboratory strain K-12.</title>
        <authorList>
            <person name="Hayashi T."/>
            <person name="Makino K."/>
            <person name="Ohnishi M."/>
            <person name="Kurokawa K."/>
            <person name="Ishii K."/>
            <person name="Yokoyama K."/>
            <person name="Han C.-G."/>
            <person name="Ohtsubo E."/>
            <person name="Nakayama K."/>
            <person name="Murata T."/>
            <person name="Tanaka M."/>
            <person name="Tobe T."/>
            <person name="Iida T."/>
            <person name="Takami H."/>
            <person name="Honda T."/>
            <person name="Sasakawa C."/>
            <person name="Ogasawara N."/>
            <person name="Yasunaga T."/>
            <person name="Kuhara S."/>
            <person name="Shiba T."/>
            <person name="Hattori M."/>
            <person name="Shinagawa H."/>
        </authorList>
    </citation>
    <scope>NUCLEOTIDE SEQUENCE [LARGE SCALE GENOMIC DNA]</scope>
    <source>
        <strain>O157:H7 / Sakai / RIMD 0509952 / EHEC</strain>
    </source>
</reference>
<keyword id="KW-0238">DNA-binding</keyword>
<keyword id="KW-1185">Reference proteome</keyword>
<keyword id="KW-0678">Repressor</keyword>
<keyword id="KW-0804">Transcription</keyword>
<keyword id="KW-0805">Transcription regulation</keyword>
<accession>Q8X835</accession>
<feature type="chain" id="PRO_0000050643" description="Probable fructoselysine utilization operon transcriptional repressor">
    <location>
        <begin position="1"/>
        <end position="243"/>
    </location>
</feature>
<feature type="domain" description="HTH gntR-type" evidence="2">
    <location>
        <begin position="10"/>
        <end position="78"/>
    </location>
</feature>
<feature type="DNA-binding region" description="H-T-H motif" evidence="2">
    <location>
        <begin position="38"/>
        <end position="57"/>
    </location>
</feature>
<dbReference type="EMBL" id="AE005174">
    <property type="protein sequence ID" value="AAG58483.1"/>
    <property type="status" value="ALT_INIT"/>
    <property type="molecule type" value="Genomic_DNA"/>
</dbReference>
<dbReference type="EMBL" id="BA000007">
    <property type="protein sequence ID" value="BAB37648.2"/>
    <property type="molecule type" value="Genomic_DNA"/>
</dbReference>
<dbReference type="PIR" id="A91157">
    <property type="entry name" value="A91157"/>
</dbReference>
<dbReference type="PIR" id="G86002">
    <property type="entry name" value="G86002"/>
</dbReference>
<dbReference type="RefSeq" id="NP_312252.4">
    <property type="nucleotide sequence ID" value="NC_002695.1"/>
</dbReference>
<dbReference type="RefSeq" id="WP_001302327.1">
    <property type="nucleotide sequence ID" value="NZ_VOAI01000004.1"/>
</dbReference>
<dbReference type="SMR" id="Q8X835"/>
<dbReference type="STRING" id="155864.Z4736"/>
<dbReference type="GeneID" id="915920"/>
<dbReference type="KEGG" id="ece:Z4736"/>
<dbReference type="KEGG" id="ecs:ECs_4225"/>
<dbReference type="PATRIC" id="fig|386585.9.peg.4411"/>
<dbReference type="eggNOG" id="COG2188">
    <property type="taxonomic scope" value="Bacteria"/>
</dbReference>
<dbReference type="HOGENOM" id="CLU_063236_8_2_6"/>
<dbReference type="OMA" id="SRYSFEF"/>
<dbReference type="UniPathway" id="UPA00784"/>
<dbReference type="Proteomes" id="UP000000558">
    <property type="component" value="Chromosome"/>
</dbReference>
<dbReference type="Proteomes" id="UP000002519">
    <property type="component" value="Chromosome"/>
</dbReference>
<dbReference type="GO" id="GO:0003677">
    <property type="term" value="F:DNA binding"/>
    <property type="evidence" value="ECO:0007669"/>
    <property type="project" value="UniProtKB-KW"/>
</dbReference>
<dbReference type="GO" id="GO:0003700">
    <property type="term" value="F:DNA-binding transcription factor activity"/>
    <property type="evidence" value="ECO:0007669"/>
    <property type="project" value="InterPro"/>
</dbReference>
<dbReference type="GO" id="GO:0045892">
    <property type="term" value="P:negative regulation of DNA-templated transcription"/>
    <property type="evidence" value="ECO:0007669"/>
    <property type="project" value="TreeGrafter"/>
</dbReference>
<dbReference type="CDD" id="cd07377">
    <property type="entry name" value="WHTH_GntR"/>
    <property type="match status" value="1"/>
</dbReference>
<dbReference type="FunFam" id="1.10.10.10:FF:000079">
    <property type="entry name" value="GntR family transcriptional regulator"/>
    <property type="match status" value="1"/>
</dbReference>
<dbReference type="Gene3D" id="3.40.1410.10">
    <property type="entry name" value="Chorismate lyase-like"/>
    <property type="match status" value="1"/>
</dbReference>
<dbReference type="Gene3D" id="1.10.10.10">
    <property type="entry name" value="Winged helix-like DNA-binding domain superfamily/Winged helix DNA-binding domain"/>
    <property type="match status" value="1"/>
</dbReference>
<dbReference type="InterPro" id="IPR050679">
    <property type="entry name" value="Bact_HTH_transcr_reg"/>
</dbReference>
<dbReference type="InterPro" id="IPR028978">
    <property type="entry name" value="Chorismate_lyase_/UTRA_dom_sf"/>
</dbReference>
<dbReference type="InterPro" id="IPR000524">
    <property type="entry name" value="Tscrpt_reg_HTH_GntR"/>
</dbReference>
<dbReference type="InterPro" id="IPR011663">
    <property type="entry name" value="UTRA"/>
</dbReference>
<dbReference type="InterPro" id="IPR036388">
    <property type="entry name" value="WH-like_DNA-bd_sf"/>
</dbReference>
<dbReference type="InterPro" id="IPR036390">
    <property type="entry name" value="WH_DNA-bd_sf"/>
</dbReference>
<dbReference type="NCBIfam" id="NF008491">
    <property type="entry name" value="PRK11402.1"/>
    <property type="match status" value="1"/>
</dbReference>
<dbReference type="PANTHER" id="PTHR44846">
    <property type="entry name" value="MANNOSYL-D-GLYCERATE TRANSPORT/METABOLISM SYSTEM REPRESSOR MNGR-RELATED"/>
    <property type="match status" value="1"/>
</dbReference>
<dbReference type="PANTHER" id="PTHR44846:SF1">
    <property type="entry name" value="MANNOSYL-D-GLYCERATE TRANSPORT_METABOLISM SYSTEM REPRESSOR MNGR-RELATED"/>
    <property type="match status" value="1"/>
</dbReference>
<dbReference type="Pfam" id="PF00392">
    <property type="entry name" value="GntR"/>
    <property type="match status" value="1"/>
</dbReference>
<dbReference type="Pfam" id="PF07702">
    <property type="entry name" value="UTRA"/>
    <property type="match status" value="1"/>
</dbReference>
<dbReference type="PRINTS" id="PR00035">
    <property type="entry name" value="HTHGNTR"/>
</dbReference>
<dbReference type="SMART" id="SM00345">
    <property type="entry name" value="HTH_GNTR"/>
    <property type="match status" value="1"/>
</dbReference>
<dbReference type="SMART" id="SM00866">
    <property type="entry name" value="UTRA"/>
    <property type="match status" value="1"/>
</dbReference>
<dbReference type="SUPFAM" id="SSF64288">
    <property type="entry name" value="Chorismate lyase-like"/>
    <property type="match status" value="1"/>
</dbReference>
<dbReference type="SUPFAM" id="SSF46785">
    <property type="entry name" value="Winged helix' DNA-binding domain"/>
    <property type="match status" value="1"/>
</dbReference>
<dbReference type="PROSITE" id="PS50949">
    <property type="entry name" value="HTH_GNTR"/>
    <property type="match status" value="1"/>
</dbReference>